<evidence type="ECO:0000255" key="1">
    <source>
        <dbReference type="PROSITE-ProRule" id="PRU00434"/>
    </source>
</evidence>
<evidence type="ECO:0000305" key="2"/>
<organism>
    <name type="scientific">Yersinia enterocolitica</name>
    <dbReference type="NCBI Taxonomy" id="630"/>
    <lineage>
        <taxon>Bacteria</taxon>
        <taxon>Pseudomonadati</taxon>
        <taxon>Pseudomonadota</taxon>
        <taxon>Gammaproteobacteria</taxon>
        <taxon>Enterobacterales</taxon>
        <taxon>Yersiniaceae</taxon>
        <taxon>Yersinia</taxon>
    </lineage>
</organism>
<proteinExistence type="inferred from homology"/>
<gene>
    <name type="primary">rfbE</name>
</gene>
<keyword id="KW-0067">ATP-binding</keyword>
<keyword id="KW-0997">Cell inner membrane</keyword>
<keyword id="KW-1003">Cell membrane</keyword>
<keyword id="KW-0472">Membrane</keyword>
<keyword id="KW-0547">Nucleotide-binding</keyword>
<keyword id="KW-0625">Polysaccharide transport</keyword>
<keyword id="KW-0762">Sugar transport</keyword>
<keyword id="KW-0813">Transport</keyword>
<reference key="1">
    <citation type="journal article" date="1993" name="Mol. Microbiol.">
        <title>Genetic organization and sequence of the rfb gene cluster of Yersinia enterocolitica serotype O:3: similarities to the dTDP-L-rhamnose biosynthesis pathway of Salmonella and to the bacterial polysaccharide transport systems.</title>
        <authorList>
            <person name="Zhang L."/>
            <person name="Al-Hendy A."/>
            <person name="Toivanen P."/>
            <person name="Skurnik M."/>
        </authorList>
    </citation>
    <scope>NUCLEOTIDE SEQUENCE [GENOMIC DNA]</scope>
    <source>
        <strain>6471/76 / Serotype O:3</strain>
    </source>
</reference>
<protein>
    <recommendedName>
        <fullName>O-antigen export system ATP-binding protein RfbE</fullName>
    </recommendedName>
</protein>
<name>RFBE_YEREN</name>
<sequence length="239" mass="26219">MTSLIFKNVTMSYPIYNAHSQSLRNQLVRVSTGGRIGGSRGEVVTVTALDNISFELNSGDSVGLIGHNGAGKSTLLRTMAGIYPASSGEIIREGSVATVFELGAGMDPELSGYENIMRMLLLLGNSVASAKSKIPEIEEFCELGDFLVLPVRTYSSGMTMRLMFAVATSMRPEILLIDEMFGTGDAAFQEKAEKRMRDWIAGSDIFVFASHDRSLIKKLCNRIFRLEHGLIYEESMDIL</sequence>
<comment type="function">
    <text>May form an ATP-driven O-antigen export apparatus, in association with RfbD.</text>
</comment>
<comment type="subcellular location">
    <subcellularLocation>
        <location evidence="2">Cell inner membrane</location>
        <topology evidence="2">Peripheral membrane protein</topology>
    </subcellularLocation>
</comment>
<comment type="similarity">
    <text evidence="2">Belongs to the ABC transporter superfamily.</text>
</comment>
<feature type="chain" id="PRO_0000092961" description="O-antigen export system ATP-binding protein RfbE">
    <location>
        <begin position="1"/>
        <end position="239"/>
    </location>
</feature>
<feature type="domain" description="ABC transporter" evidence="1">
    <location>
        <begin position="28"/>
        <end position="239"/>
    </location>
</feature>
<feature type="binding site" evidence="1">
    <location>
        <begin position="66"/>
        <end position="73"/>
    </location>
    <ligand>
        <name>ATP</name>
        <dbReference type="ChEBI" id="CHEBI:30616"/>
    </ligand>
</feature>
<accession>Q56903</accession>
<dbReference type="EMBL" id="Z18920">
    <property type="protein sequence ID" value="CAA79351.1"/>
    <property type="molecule type" value="Genomic_DNA"/>
</dbReference>
<dbReference type="PIR" id="S35298">
    <property type="entry name" value="S35298"/>
</dbReference>
<dbReference type="RefSeq" id="WP_005157827.1">
    <property type="nucleotide sequence ID" value="NZ_WJHZ01000037.1"/>
</dbReference>
<dbReference type="SMR" id="Q56903"/>
<dbReference type="GeneID" id="31409720"/>
<dbReference type="GO" id="GO:0005886">
    <property type="term" value="C:plasma membrane"/>
    <property type="evidence" value="ECO:0007669"/>
    <property type="project" value="UniProtKB-SubCell"/>
</dbReference>
<dbReference type="GO" id="GO:0140359">
    <property type="term" value="F:ABC-type transporter activity"/>
    <property type="evidence" value="ECO:0007669"/>
    <property type="project" value="InterPro"/>
</dbReference>
<dbReference type="GO" id="GO:0005524">
    <property type="term" value="F:ATP binding"/>
    <property type="evidence" value="ECO:0007669"/>
    <property type="project" value="UniProtKB-KW"/>
</dbReference>
<dbReference type="GO" id="GO:0016887">
    <property type="term" value="F:ATP hydrolysis activity"/>
    <property type="evidence" value="ECO:0007669"/>
    <property type="project" value="InterPro"/>
</dbReference>
<dbReference type="GO" id="GO:0015774">
    <property type="term" value="P:polysaccharide transport"/>
    <property type="evidence" value="ECO:0007669"/>
    <property type="project" value="UniProtKB-KW"/>
</dbReference>
<dbReference type="CDD" id="cd03220">
    <property type="entry name" value="ABC_KpsT_Wzt"/>
    <property type="match status" value="1"/>
</dbReference>
<dbReference type="Gene3D" id="3.40.50.300">
    <property type="entry name" value="P-loop containing nucleotide triphosphate hydrolases"/>
    <property type="match status" value="1"/>
</dbReference>
<dbReference type="InterPro" id="IPR003593">
    <property type="entry name" value="AAA+_ATPase"/>
</dbReference>
<dbReference type="InterPro" id="IPR003439">
    <property type="entry name" value="ABC_transporter-like_ATP-bd"/>
</dbReference>
<dbReference type="InterPro" id="IPR015860">
    <property type="entry name" value="ABC_transpr_TagH-like"/>
</dbReference>
<dbReference type="InterPro" id="IPR050683">
    <property type="entry name" value="Bact_Polysacc_Export_ATP-bd"/>
</dbReference>
<dbReference type="InterPro" id="IPR027417">
    <property type="entry name" value="P-loop_NTPase"/>
</dbReference>
<dbReference type="PANTHER" id="PTHR46743">
    <property type="entry name" value="TEICHOIC ACIDS EXPORT ATP-BINDING PROTEIN TAGH"/>
    <property type="match status" value="1"/>
</dbReference>
<dbReference type="PANTHER" id="PTHR46743:SF2">
    <property type="entry name" value="TEICHOIC ACIDS EXPORT ATP-BINDING PROTEIN TAGH"/>
    <property type="match status" value="1"/>
</dbReference>
<dbReference type="Pfam" id="PF00005">
    <property type="entry name" value="ABC_tran"/>
    <property type="match status" value="1"/>
</dbReference>
<dbReference type="SMART" id="SM00382">
    <property type="entry name" value="AAA"/>
    <property type="match status" value="1"/>
</dbReference>
<dbReference type="SUPFAM" id="SSF52540">
    <property type="entry name" value="P-loop containing nucleoside triphosphate hydrolases"/>
    <property type="match status" value="1"/>
</dbReference>
<dbReference type="PROSITE" id="PS50893">
    <property type="entry name" value="ABC_TRANSPORTER_2"/>
    <property type="match status" value="1"/>
</dbReference>